<proteinExistence type="inferred from homology"/>
<dbReference type="EC" id="1.17.7.3" evidence="1"/>
<dbReference type="EMBL" id="CU468230">
    <property type="protein sequence ID" value="CAP02287.1"/>
    <property type="molecule type" value="Genomic_DNA"/>
</dbReference>
<dbReference type="SMR" id="B0VKR8"/>
<dbReference type="KEGG" id="abm:ABSDF3001"/>
<dbReference type="HOGENOM" id="CLU_042258_0_0_6"/>
<dbReference type="UniPathway" id="UPA00056">
    <property type="reaction ID" value="UER00096"/>
</dbReference>
<dbReference type="Proteomes" id="UP000001741">
    <property type="component" value="Chromosome"/>
</dbReference>
<dbReference type="GO" id="GO:0051539">
    <property type="term" value="F:4 iron, 4 sulfur cluster binding"/>
    <property type="evidence" value="ECO:0007669"/>
    <property type="project" value="UniProtKB-UniRule"/>
</dbReference>
<dbReference type="GO" id="GO:0046429">
    <property type="term" value="F:4-hydroxy-3-methylbut-2-en-1-yl diphosphate synthase activity (ferredoxin)"/>
    <property type="evidence" value="ECO:0007669"/>
    <property type="project" value="UniProtKB-UniRule"/>
</dbReference>
<dbReference type="GO" id="GO:0141197">
    <property type="term" value="F:4-hydroxy-3-methylbut-2-enyl-diphosphate synthase activity (flavodoxin)"/>
    <property type="evidence" value="ECO:0007669"/>
    <property type="project" value="UniProtKB-EC"/>
</dbReference>
<dbReference type="GO" id="GO:0005506">
    <property type="term" value="F:iron ion binding"/>
    <property type="evidence" value="ECO:0007669"/>
    <property type="project" value="InterPro"/>
</dbReference>
<dbReference type="GO" id="GO:0019288">
    <property type="term" value="P:isopentenyl diphosphate biosynthetic process, methylerythritol 4-phosphate pathway"/>
    <property type="evidence" value="ECO:0007669"/>
    <property type="project" value="UniProtKB-UniRule"/>
</dbReference>
<dbReference type="GO" id="GO:0016114">
    <property type="term" value="P:terpenoid biosynthetic process"/>
    <property type="evidence" value="ECO:0007669"/>
    <property type="project" value="InterPro"/>
</dbReference>
<dbReference type="FunFam" id="3.20.20.20:FF:000001">
    <property type="entry name" value="4-hydroxy-3-methylbut-2-en-1-yl diphosphate synthase (flavodoxin)"/>
    <property type="match status" value="1"/>
</dbReference>
<dbReference type="Gene3D" id="3.20.20.20">
    <property type="entry name" value="Dihydropteroate synthase-like"/>
    <property type="match status" value="1"/>
</dbReference>
<dbReference type="Gene3D" id="3.30.413.10">
    <property type="entry name" value="Sulfite Reductase Hemoprotein, domain 1"/>
    <property type="match status" value="1"/>
</dbReference>
<dbReference type="HAMAP" id="MF_00159">
    <property type="entry name" value="IspG"/>
    <property type="match status" value="1"/>
</dbReference>
<dbReference type="InterPro" id="IPR011005">
    <property type="entry name" value="Dihydropteroate_synth-like_sf"/>
</dbReference>
<dbReference type="InterPro" id="IPR016425">
    <property type="entry name" value="IspG_bac"/>
</dbReference>
<dbReference type="InterPro" id="IPR004588">
    <property type="entry name" value="IspG_bac-typ"/>
</dbReference>
<dbReference type="InterPro" id="IPR045854">
    <property type="entry name" value="NO2/SO3_Rdtase_4Fe4S_sf"/>
</dbReference>
<dbReference type="NCBIfam" id="TIGR00612">
    <property type="entry name" value="ispG_gcpE"/>
    <property type="match status" value="1"/>
</dbReference>
<dbReference type="NCBIfam" id="NF001540">
    <property type="entry name" value="PRK00366.1"/>
    <property type="match status" value="1"/>
</dbReference>
<dbReference type="PANTHER" id="PTHR30454">
    <property type="entry name" value="4-HYDROXY-3-METHYLBUT-2-EN-1-YL DIPHOSPHATE SYNTHASE"/>
    <property type="match status" value="1"/>
</dbReference>
<dbReference type="PANTHER" id="PTHR30454:SF0">
    <property type="entry name" value="4-HYDROXY-3-METHYLBUT-2-EN-1-YL DIPHOSPHATE SYNTHASE (FERREDOXIN), CHLOROPLASTIC"/>
    <property type="match status" value="1"/>
</dbReference>
<dbReference type="Pfam" id="PF04551">
    <property type="entry name" value="GcpE"/>
    <property type="match status" value="1"/>
</dbReference>
<dbReference type="PIRSF" id="PIRSF004640">
    <property type="entry name" value="IspG"/>
    <property type="match status" value="1"/>
</dbReference>
<dbReference type="SUPFAM" id="SSF51717">
    <property type="entry name" value="Dihydropteroate synthetase-like"/>
    <property type="match status" value="1"/>
</dbReference>
<dbReference type="SUPFAM" id="SSF56014">
    <property type="entry name" value="Nitrite and sulphite reductase 4Fe-4S domain-like"/>
    <property type="match status" value="1"/>
</dbReference>
<evidence type="ECO:0000255" key="1">
    <source>
        <dbReference type="HAMAP-Rule" id="MF_00159"/>
    </source>
</evidence>
<reference key="1">
    <citation type="journal article" date="2008" name="PLoS ONE">
        <title>Comparative analysis of Acinetobacters: three genomes for three lifestyles.</title>
        <authorList>
            <person name="Vallenet D."/>
            <person name="Nordmann P."/>
            <person name="Barbe V."/>
            <person name="Poirel L."/>
            <person name="Mangenot S."/>
            <person name="Bataille E."/>
            <person name="Dossat C."/>
            <person name="Gas S."/>
            <person name="Kreimeyer A."/>
            <person name="Lenoble P."/>
            <person name="Oztas S."/>
            <person name="Poulain J."/>
            <person name="Segurens B."/>
            <person name="Robert C."/>
            <person name="Abergel C."/>
            <person name="Claverie J.-M."/>
            <person name="Raoult D."/>
            <person name="Medigue C."/>
            <person name="Weissenbach J."/>
            <person name="Cruveiller S."/>
        </authorList>
    </citation>
    <scope>NUCLEOTIDE SEQUENCE [LARGE SCALE GENOMIC DNA]</scope>
    <source>
        <strain>SDF</strain>
    </source>
</reference>
<comment type="function">
    <text evidence="1">Converts 2C-methyl-D-erythritol 2,4-cyclodiphosphate (ME-2,4cPP) into 1-hydroxy-2-methyl-2-(E)-butenyl 4-diphosphate.</text>
</comment>
<comment type="catalytic activity">
    <reaction evidence="1">
        <text>(2E)-4-hydroxy-3-methylbut-2-enyl diphosphate + oxidized [flavodoxin] + H2O + 2 H(+) = 2-C-methyl-D-erythritol 2,4-cyclic diphosphate + reduced [flavodoxin]</text>
        <dbReference type="Rhea" id="RHEA:43604"/>
        <dbReference type="Rhea" id="RHEA-COMP:10622"/>
        <dbReference type="Rhea" id="RHEA-COMP:10623"/>
        <dbReference type="ChEBI" id="CHEBI:15377"/>
        <dbReference type="ChEBI" id="CHEBI:15378"/>
        <dbReference type="ChEBI" id="CHEBI:57618"/>
        <dbReference type="ChEBI" id="CHEBI:58210"/>
        <dbReference type="ChEBI" id="CHEBI:58483"/>
        <dbReference type="ChEBI" id="CHEBI:128753"/>
        <dbReference type="EC" id="1.17.7.3"/>
    </reaction>
</comment>
<comment type="cofactor">
    <cofactor evidence="1">
        <name>[4Fe-4S] cluster</name>
        <dbReference type="ChEBI" id="CHEBI:49883"/>
    </cofactor>
    <text evidence="1">Binds 1 [4Fe-4S] cluster.</text>
</comment>
<comment type="pathway">
    <text evidence="1">Isoprenoid biosynthesis; isopentenyl diphosphate biosynthesis via DXP pathway; isopentenyl diphosphate from 1-deoxy-D-xylulose 5-phosphate: step 5/6.</text>
</comment>
<comment type="similarity">
    <text evidence="1">Belongs to the IspG family.</text>
</comment>
<keyword id="KW-0004">4Fe-4S</keyword>
<keyword id="KW-0408">Iron</keyword>
<keyword id="KW-0411">Iron-sulfur</keyword>
<keyword id="KW-0414">Isoprene biosynthesis</keyword>
<keyword id="KW-0479">Metal-binding</keyword>
<keyword id="KW-0560">Oxidoreductase</keyword>
<gene>
    <name evidence="1" type="primary">ispG</name>
    <name type="ordered locus">ABSDF3001</name>
</gene>
<sequence>MIENPIKRRPTRKIRVGSVYVGGDAPISVQSMTNTETCDVDATVAQIERCVDAGADIMRVSVPSMEAAEAFGAIRKRVSVPLVADIHFDHRIALAVADYGADCLRINPGNIGSDQKVREVVAAARHHGISMRIGVNAGSLEKDLQKKYGEPTGQALLESALRHIDILDRLDFHEFKVSVKASNVFLTMDAYRLLSQQIDNPLHLGVTEAGIYRTGTVKSAIALGGLLMEGIGDTMRISLAAEPEDEIKIGFDILKSLGLRSNGINFIACPSCSRQEFNVIQVMQALEERLEDIRTPMDVSVIGCKVNGPGEAKEADIGVVGAAPRSLVYRNGEKSHLIDTNQLVDEIETMVRQRVQELEEAKSKEIIRSSS</sequence>
<organism>
    <name type="scientific">Acinetobacter baumannii (strain SDF)</name>
    <dbReference type="NCBI Taxonomy" id="509170"/>
    <lineage>
        <taxon>Bacteria</taxon>
        <taxon>Pseudomonadati</taxon>
        <taxon>Pseudomonadota</taxon>
        <taxon>Gammaproteobacteria</taxon>
        <taxon>Moraxellales</taxon>
        <taxon>Moraxellaceae</taxon>
        <taxon>Acinetobacter</taxon>
        <taxon>Acinetobacter calcoaceticus/baumannii complex</taxon>
    </lineage>
</organism>
<protein>
    <recommendedName>
        <fullName evidence="1">4-hydroxy-3-methylbut-2-en-1-yl diphosphate synthase (flavodoxin)</fullName>
        <ecNumber evidence="1">1.17.7.3</ecNumber>
    </recommendedName>
    <alternativeName>
        <fullName evidence="1">1-hydroxy-2-methyl-2-(E)-butenyl 4-diphosphate synthase</fullName>
    </alternativeName>
</protein>
<feature type="chain" id="PRO_1000097138" description="4-hydroxy-3-methylbut-2-en-1-yl diphosphate synthase (flavodoxin)">
    <location>
        <begin position="1"/>
        <end position="371"/>
    </location>
</feature>
<feature type="binding site" evidence="1">
    <location>
        <position position="269"/>
    </location>
    <ligand>
        <name>[4Fe-4S] cluster</name>
        <dbReference type="ChEBI" id="CHEBI:49883"/>
    </ligand>
</feature>
<feature type="binding site" evidence="1">
    <location>
        <position position="272"/>
    </location>
    <ligand>
        <name>[4Fe-4S] cluster</name>
        <dbReference type="ChEBI" id="CHEBI:49883"/>
    </ligand>
</feature>
<feature type="binding site" evidence="1">
    <location>
        <position position="304"/>
    </location>
    <ligand>
        <name>[4Fe-4S] cluster</name>
        <dbReference type="ChEBI" id="CHEBI:49883"/>
    </ligand>
</feature>
<feature type="binding site" evidence="1">
    <location>
        <position position="311"/>
    </location>
    <ligand>
        <name>[4Fe-4S] cluster</name>
        <dbReference type="ChEBI" id="CHEBI:49883"/>
    </ligand>
</feature>
<name>ISPG_ACIBS</name>
<accession>B0VKR8</accession>